<evidence type="ECO:0000250" key="1"/>
<evidence type="ECO:0000269" key="2">
    <source>
    </source>
</evidence>
<evidence type="ECO:0000305" key="3"/>
<evidence type="ECO:0000312" key="4">
    <source>
        <dbReference type="EMBL" id="BAA23263.1"/>
    </source>
</evidence>
<evidence type="ECO:0000312" key="5">
    <source>
        <dbReference type="EMBL" id="BAA24966.1"/>
    </source>
</evidence>
<organism>
    <name type="scientific">Nocardioides sp. (strain KP7)</name>
    <dbReference type="NCBI Taxonomy" id="102632"/>
    <lineage>
        <taxon>Bacteria</taxon>
        <taxon>Bacillati</taxon>
        <taxon>Actinomycetota</taxon>
        <taxon>Actinomycetes</taxon>
        <taxon>Propionibacteriales</taxon>
        <taxon>Nocardioidaceae</taxon>
        <taxon>Nocardioides</taxon>
    </lineage>
</organism>
<feature type="initiator methionine" description="Removed" evidence="2">
    <location>
        <position position="1"/>
    </location>
</feature>
<feature type="chain" id="PRO_0000403697" description="Trans-2'-carboxybenzalpyruvate hydratase-aldolase" evidence="2">
    <location>
        <begin position="2"/>
        <end position="332"/>
    </location>
</feature>
<feature type="active site" description="Schiff-base intermediate with substrate" evidence="1">
    <location>
        <position position="178"/>
    </location>
</feature>
<feature type="site" description="Involved in proton transfer during cleavage" evidence="1">
    <location>
        <position position="150"/>
    </location>
</feature>
<dbReference type="EC" id="4.1.2.34"/>
<dbReference type="EMBL" id="AB000735">
    <property type="protein sequence ID" value="BAA23263.1"/>
    <property type="molecule type" value="Genomic_DNA"/>
</dbReference>
<dbReference type="EMBL" id="D89988">
    <property type="protein sequence ID" value="BAA24966.1"/>
    <property type="molecule type" value="Genomic_DNA"/>
</dbReference>
<dbReference type="SMR" id="Q79EM8"/>
<dbReference type="BRENDA" id="4.1.2.34">
    <property type="organism ID" value="4363"/>
</dbReference>
<dbReference type="GO" id="GO:0018803">
    <property type="term" value="F:4-(2-carboxyphenyl)-2-oxobut-3-enoate aldolase activity"/>
    <property type="evidence" value="ECO:0000314"/>
    <property type="project" value="UniProtKB"/>
</dbReference>
<dbReference type="GO" id="GO:0008840">
    <property type="term" value="F:4-hydroxy-tetrahydrodipicolinate synthase activity"/>
    <property type="evidence" value="ECO:0007669"/>
    <property type="project" value="TreeGrafter"/>
</dbReference>
<dbReference type="GO" id="GO:0042216">
    <property type="term" value="P:phenanthrene catabolic process"/>
    <property type="evidence" value="ECO:0000314"/>
    <property type="project" value="UniProtKB"/>
</dbReference>
<dbReference type="CDD" id="cd00952">
    <property type="entry name" value="CHBPH_aldolase"/>
    <property type="match status" value="1"/>
</dbReference>
<dbReference type="FunFam" id="3.20.20.70:FF:000190">
    <property type="entry name" value="Trans-o-hydroxybenzylidenepyruvate hydratase-aldolase"/>
    <property type="match status" value="1"/>
</dbReference>
<dbReference type="Gene3D" id="3.20.20.70">
    <property type="entry name" value="Aldolase class I"/>
    <property type="match status" value="1"/>
</dbReference>
<dbReference type="InterPro" id="IPR013785">
    <property type="entry name" value="Aldolase_TIM"/>
</dbReference>
<dbReference type="InterPro" id="IPR002220">
    <property type="entry name" value="DapA-like"/>
</dbReference>
<dbReference type="InterPro" id="IPR048038">
    <property type="entry name" value="HBPHA/CBPHA"/>
</dbReference>
<dbReference type="PANTHER" id="PTHR12128:SF66">
    <property type="entry name" value="4-HYDROXY-2-OXOGLUTARATE ALDOLASE, MITOCHONDRIAL"/>
    <property type="match status" value="1"/>
</dbReference>
<dbReference type="PANTHER" id="PTHR12128">
    <property type="entry name" value="DIHYDRODIPICOLINATE SYNTHASE"/>
    <property type="match status" value="1"/>
</dbReference>
<dbReference type="Pfam" id="PF00701">
    <property type="entry name" value="DHDPS"/>
    <property type="match status" value="1"/>
</dbReference>
<dbReference type="PIRSF" id="PIRSF001365">
    <property type="entry name" value="DHDPS"/>
    <property type="match status" value="1"/>
</dbReference>
<dbReference type="PRINTS" id="PR00146">
    <property type="entry name" value="DHPICSNTHASE"/>
</dbReference>
<dbReference type="SMART" id="SM01130">
    <property type="entry name" value="DHDPS"/>
    <property type="match status" value="1"/>
</dbReference>
<dbReference type="SUPFAM" id="SSF51569">
    <property type="entry name" value="Aldolase"/>
    <property type="match status" value="1"/>
</dbReference>
<name>PHDJ_NOCSK</name>
<accession>Q79EM8</accession>
<accession>O24722</accession>
<comment type="function">
    <text evidence="2">Plays a role in phenanthrene catabolism. Catalyzes the transformation of trans-2'-carboxbenzalpyruvate to 2-formylbenzoate and pyruvate.</text>
</comment>
<comment type="catalytic activity">
    <reaction evidence="2">
        <text>(3Z)-4-(2-carboxyphenyl)-2-oxobut-3-enoate + H2O = 2-formylbenzoate + pyruvate</text>
        <dbReference type="Rhea" id="RHEA:16453"/>
        <dbReference type="ChEBI" id="CHEBI:15361"/>
        <dbReference type="ChEBI" id="CHEBI:15377"/>
        <dbReference type="ChEBI" id="CHEBI:58203"/>
        <dbReference type="ChEBI" id="CHEBI:58794"/>
        <dbReference type="EC" id="4.1.2.34"/>
    </reaction>
</comment>
<comment type="activity regulation">
    <text evidence="2">Not inhibited by sodium borohydride or sodium pyruvate. Unaffected by EDTA, EGTA, Mn(2+), Mg(2+) and Ca(2+).</text>
</comment>
<comment type="biophysicochemical properties">
    <kinetics>
        <KM evidence="2">50 uM for trans-2'-carboxbenzalpyruvate</KM>
    </kinetics>
    <phDependence>
        <text evidence="2">Optimum pH is 7.5.</text>
    </phDependence>
    <temperatureDependence>
        <text evidence="2">Optimum temperature is 45 degrees Celsius.</text>
    </temperatureDependence>
</comment>
<comment type="subunit">
    <text evidence="2">Homotrimer.</text>
</comment>
<comment type="induction">
    <text evidence="2">By phenanthrene.</text>
</comment>
<comment type="similarity">
    <text evidence="3">Belongs to the DapA family.</text>
</comment>
<sequence length="332" mass="34881">MTSPAVTSADITGLVGIVPTPSKPGSEAPDAVDTVDLDETARMVELIVASGVDVLLTNGTFGEVATLTYEELLAFNDTVIRTVANRIPVFCGASTLNTRDTIARSLALMGLGANGLFVGRPMWLPLDDEQLVSYYAAVCDAVPAAAVVVYDNTGVFKGKISSAAYAALAEIPQIVASKHLGVLSGSDAYASDLAAVKGRFPLLPTADNWLPSLEAFPGEVPAAWSGDVACGPEPVMALRRAIAEGLWDDARAVHEDIAWATEPLFPGGDISKFMPYSIQIDRAEFEAAGYIVPGPSRHPYGTAPAAYLEGGAEVGRRWAGIRQKYVATLAEP</sequence>
<keyword id="KW-0058">Aromatic hydrocarbons catabolism</keyword>
<keyword id="KW-0903">Direct protein sequencing</keyword>
<keyword id="KW-0456">Lyase</keyword>
<keyword id="KW-0670">Pyruvate</keyword>
<protein>
    <recommendedName>
        <fullName evidence="5">Trans-2'-carboxybenzalpyruvate hydratase-aldolase</fullName>
        <ecNumber>4.1.2.34</ecNumber>
    </recommendedName>
</protein>
<reference evidence="4" key="1">
    <citation type="journal article" date="1997" name="J. Bacteriol.">
        <title>Biochemical and genetic characterization of 2-carboxybenzaldehyde dehydrogenase, an enzyme involved in phenanthrene degradation by Nocardioides sp. strain KP7.</title>
        <authorList>
            <person name="Iwabuchi T."/>
            <person name="Harayama S."/>
        </authorList>
    </citation>
    <scope>NUCLEOTIDE SEQUENCE [GENOMIC DNA]</scope>
</reference>
<reference evidence="3 5" key="2">
    <citation type="journal article" date="1998" name="J. Bacteriol.">
        <title>Biochemical and genetic characterization of trans-2'-carboxybenzalpyruvate hydratase-aldolase from a phenanthrene-degrading Nocardioides strain.</title>
        <authorList>
            <person name="Iwabuchi T."/>
            <person name="Harayama S."/>
        </authorList>
    </citation>
    <scope>NUCLEOTIDE SEQUENCE [GENOMIC DNA]</scope>
    <scope>PROTEIN SEQUENCE OF 2-25</scope>
    <scope>FUNCTION</scope>
    <scope>CATALYTIC ACTIVITY</scope>
    <scope>ACTIVITY REGULATION</scope>
    <scope>BIOPHYSICOCHEMICAL PROPERTIES</scope>
    <scope>SUBUNIT</scope>
    <scope>INDUCTION</scope>
</reference>
<proteinExistence type="evidence at protein level"/>
<gene>
    <name evidence="5" type="primary">phdJ</name>
</gene>